<dbReference type="EC" id="6.3.5.-" evidence="1"/>
<dbReference type="EMBL" id="CP000077">
    <property type="protein sequence ID" value="AAY80684.1"/>
    <property type="molecule type" value="Genomic_DNA"/>
</dbReference>
<dbReference type="RefSeq" id="WP_011278186.1">
    <property type="nucleotide sequence ID" value="NC_007181.1"/>
</dbReference>
<dbReference type="SMR" id="Q4J955"/>
<dbReference type="STRING" id="330779.Saci_1349"/>
<dbReference type="GeneID" id="14551852"/>
<dbReference type="GeneID" id="78441695"/>
<dbReference type="KEGG" id="sai:Saci_1349"/>
<dbReference type="PATRIC" id="fig|330779.12.peg.1302"/>
<dbReference type="eggNOG" id="arCOG01924">
    <property type="taxonomic scope" value="Archaea"/>
</dbReference>
<dbReference type="HOGENOM" id="CLU_019134_2_1_2"/>
<dbReference type="Proteomes" id="UP000001018">
    <property type="component" value="Chromosome"/>
</dbReference>
<dbReference type="GO" id="GO:0004067">
    <property type="term" value="F:asparaginase activity"/>
    <property type="evidence" value="ECO:0007669"/>
    <property type="project" value="InterPro"/>
</dbReference>
<dbReference type="GO" id="GO:0005524">
    <property type="term" value="F:ATP binding"/>
    <property type="evidence" value="ECO:0007669"/>
    <property type="project" value="UniProtKB-KW"/>
</dbReference>
<dbReference type="GO" id="GO:0050567">
    <property type="term" value="F:glutaminyl-tRNA synthase (glutamine-hydrolyzing) activity"/>
    <property type="evidence" value="ECO:0007669"/>
    <property type="project" value="UniProtKB-UniRule"/>
</dbReference>
<dbReference type="GO" id="GO:0006520">
    <property type="term" value="P:amino acid metabolic process"/>
    <property type="evidence" value="ECO:0007669"/>
    <property type="project" value="InterPro"/>
</dbReference>
<dbReference type="GO" id="GO:0006450">
    <property type="term" value="P:regulation of translational fidelity"/>
    <property type="evidence" value="ECO:0007669"/>
    <property type="project" value="InterPro"/>
</dbReference>
<dbReference type="GO" id="GO:0006412">
    <property type="term" value="P:translation"/>
    <property type="evidence" value="ECO:0007669"/>
    <property type="project" value="UniProtKB-UniRule"/>
</dbReference>
<dbReference type="CDD" id="cd08962">
    <property type="entry name" value="GatD"/>
    <property type="match status" value="1"/>
</dbReference>
<dbReference type="Gene3D" id="2.30.30.520">
    <property type="match status" value="1"/>
</dbReference>
<dbReference type="Gene3D" id="3.40.50.40">
    <property type="match status" value="1"/>
</dbReference>
<dbReference type="Gene3D" id="3.40.50.1170">
    <property type="entry name" value="L-asparaginase, N-terminal domain"/>
    <property type="match status" value="1"/>
</dbReference>
<dbReference type="HAMAP" id="MF_00586">
    <property type="entry name" value="GatD"/>
    <property type="match status" value="1"/>
</dbReference>
<dbReference type="InterPro" id="IPR006033">
    <property type="entry name" value="AsnA_fam"/>
</dbReference>
<dbReference type="InterPro" id="IPR036152">
    <property type="entry name" value="Asp/glu_Ase-like_sf"/>
</dbReference>
<dbReference type="InterPro" id="IPR006034">
    <property type="entry name" value="Asparaginase/glutaminase-like"/>
</dbReference>
<dbReference type="InterPro" id="IPR027475">
    <property type="entry name" value="Asparaginase/glutaminase_AS2"/>
</dbReference>
<dbReference type="InterPro" id="IPR040919">
    <property type="entry name" value="Asparaginase_C"/>
</dbReference>
<dbReference type="InterPro" id="IPR011878">
    <property type="entry name" value="GatD"/>
</dbReference>
<dbReference type="InterPro" id="IPR040918">
    <property type="entry name" value="GatD_N"/>
</dbReference>
<dbReference type="InterPro" id="IPR037222">
    <property type="entry name" value="GatD_N_sf"/>
</dbReference>
<dbReference type="InterPro" id="IPR027473">
    <property type="entry name" value="L-asparaginase_C"/>
</dbReference>
<dbReference type="InterPro" id="IPR027474">
    <property type="entry name" value="L-asparaginase_N"/>
</dbReference>
<dbReference type="InterPro" id="IPR037152">
    <property type="entry name" value="L-asparaginase_N_sf"/>
</dbReference>
<dbReference type="NCBIfam" id="TIGR00519">
    <property type="entry name" value="asnASE_I"/>
    <property type="match status" value="1"/>
</dbReference>
<dbReference type="NCBIfam" id="TIGR02153">
    <property type="entry name" value="gatD_arch"/>
    <property type="match status" value="1"/>
</dbReference>
<dbReference type="NCBIfam" id="NF003217">
    <property type="entry name" value="PRK04183.1"/>
    <property type="match status" value="1"/>
</dbReference>
<dbReference type="PANTHER" id="PTHR11707:SF28">
    <property type="entry name" value="60 KDA LYSOPHOSPHOLIPASE"/>
    <property type="match status" value="1"/>
</dbReference>
<dbReference type="PANTHER" id="PTHR11707">
    <property type="entry name" value="L-ASPARAGINASE"/>
    <property type="match status" value="1"/>
</dbReference>
<dbReference type="Pfam" id="PF00710">
    <property type="entry name" value="Asparaginase"/>
    <property type="match status" value="1"/>
</dbReference>
<dbReference type="Pfam" id="PF17763">
    <property type="entry name" value="Asparaginase_C"/>
    <property type="match status" value="1"/>
</dbReference>
<dbReference type="Pfam" id="PF18195">
    <property type="entry name" value="GatD_N"/>
    <property type="match status" value="1"/>
</dbReference>
<dbReference type="PIRSF" id="PIRSF500175">
    <property type="entry name" value="Glu_ADT_D"/>
    <property type="match status" value="1"/>
</dbReference>
<dbReference type="PIRSF" id="PIRSF001220">
    <property type="entry name" value="L-ASNase_gatD"/>
    <property type="match status" value="1"/>
</dbReference>
<dbReference type="PRINTS" id="PR00139">
    <property type="entry name" value="ASNGLNASE"/>
</dbReference>
<dbReference type="SMART" id="SM00870">
    <property type="entry name" value="Asparaginase"/>
    <property type="match status" value="1"/>
</dbReference>
<dbReference type="SUPFAM" id="SSF141300">
    <property type="entry name" value="GatD N-terminal domain-like"/>
    <property type="match status" value="1"/>
</dbReference>
<dbReference type="SUPFAM" id="SSF53774">
    <property type="entry name" value="Glutaminase/Asparaginase"/>
    <property type="match status" value="1"/>
</dbReference>
<dbReference type="PROSITE" id="PS00917">
    <property type="entry name" value="ASN_GLN_ASE_2"/>
    <property type="match status" value="1"/>
</dbReference>
<dbReference type="PROSITE" id="PS51732">
    <property type="entry name" value="ASN_GLN_ASE_3"/>
    <property type="match status" value="1"/>
</dbReference>
<reference key="1">
    <citation type="journal article" date="2005" name="J. Bacteriol.">
        <title>The genome of Sulfolobus acidocaldarius, a model organism of the Crenarchaeota.</title>
        <authorList>
            <person name="Chen L."/>
            <person name="Bruegger K."/>
            <person name="Skovgaard M."/>
            <person name="Redder P."/>
            <person name="She Q."/>
            <person name="Torarinsson E."/>
            <person name="Greve B."/>
            <person name="Awayez M."/>
            <person name="Zibat A."/>
            <person name="Klenk H.-P."/>
            <person name="Garrett R.A."/>
        </authorList>
    </citation>
    <scope>NUCLEOTIDE SEQUENCE [LARGE SCALE GENOMIC DNA]</scope>
    <source>
        <strain>ATCC 33909 / DSM 639 / JCM 8929 / NBRC 15157 / NCIMB 11770</strain>
    </source>
</reference>
<organism>
    <name type="scientific">Sulfolobus acidocaldarius (strain ATCC 33909 / DSM 639 / JCM 8929 / NBRC 15157 / NCIMB 11770)</name>
    <dbReference type="NCBI Taxonomy" id="330779"/>
    <lineage>
        <taxon>Archaea</taxon>
        <taxon>Thermoproteota</taxon>
        <taxon>Thermoprotei</taxon>
        <taxon>Sulfolobales</taxon>
        <taxon>Sulfolobaceae</taxon>
        <taxon>Sulfolobus</taxon>
    </lineage>
</organism>
<feature type="chain" id="PRO_0000140063" description="Glutamyl-tRNA(Gln) amidotransferase subunit D">
    <location>
        <begin position="1"/>
        <end position="446"/>
    </location>
</feature>
<feature type="domain" description="Asparaginase/glutaminase" evidence="2">
    <location>
        <begin position="90"/>
        <end position="421"/>
    </location>
</feature>
<feature type="active site" evidence="1">
    <location>
        <position position="100"/>
    </location>
</feature>
<feature type="active site" evidence="1">
    <location>
        <position position="176"/>
    </location>
</feature>
<feature type="active site" evidence="1">
    <location>
        <position position="177"/>
    </location>
</feature>
<feature type="active site" evidence="1">
    <location>
        <position position="255"/>
    </location>
</feature>
<keyword id="KW-0067">ATP-binding</keyword>
<keyword id="KW-0436">Ligase</keyword>
<keyword id="KW-0547">Nucleotide-binding</keyword>
<keyword id="KW-0648">Protein biosynthesis</keyword>
<keyword id="KW-1185">Reference proteome</keyword>
<accession>Q4J955</accession>
<protein>
    <recommendedName>
        <fullName evidence="1">Glutamyl-tRNA(Gln) amidotransferase subunit D</fullName>
        <shortName evidence="1">Glu-ADT subunit D</shortName>
        <ecNumber evidence="1">6.3.5.-</ecNumber>
    </recommendedName>
</protein>
<proteinExistence type="inferred from homology"/>
<evidence type="ECO:0000255" key="1">
    <source>
        <dbReference type="HAMAP-Rule" id="MF_00586"/>
    </source>
</evidence>
<evidence type="ECO:0000255" key="2">
    <source>
        <dbReference type="PROSITE-ProRule" id="PRU01068"/>
    </source>
</evidence>
<gene>
    <name evidence="1" type="primary">gatD</name>
    <name type="ordered locus">Saci_1349</name>
</gene>
<sequence>MPETYWGKAREFLSKHNLDVGDIIELEKNGIQVKGIIMPTYSNNDDIIVLKLDNGYNIGISVSNIQNVKLIEKKRKEEKRREGAVSTTNSEVMIISTGGTIVSKIEYETGAVRPALTPDEIIEFMPEIKEIARIDAEILFSILSENMKPEYWIKIAEEAKKALDKGNKGVVIAHGTDTMAYTSAALSFSFRKMTGPIVLVGSQRSSDRPSSDSSMNLLTSILVAKNAPFGEVVVNMHGESSDTYTLVHRGVKVRKMHTSRRDAFQSINDLPLAKVHYIDKKIEILSDNYRSKESENTLDAKFDNRVFLLKYYPGLSPDMVEHLISSGIRGIIIEGTGLGHTSSDFYEVFKKASKDGVFIGMTSQCLFGRVNMNVYTTGRLLQEAGVVPLEDMLPETALVKLMWTLAHENDLDRIKEIMLTNLAGEINYIHHYEMFPRWYHDRIRLQ</sequence>
<comment type="function">
    <text evidence="1">Allows the formation of correctly charged Gln-tRNA(Gln) through the transamidation of misacylated Glu-tRNA(Gln) in organisms which lack glutaminyl-tRNA synthetase. The reaction takes place in the presence of glutamine and ATP through an activated gamma-phospho-Glu-tRNA(Gln). The GatDE system is specific for glutamate and does not act on aspartate.</text>
</comment>
<comment type="catalytic activity">
    <reaction evidence="1">
        <text>L-glutamyl-tRNA(Gln) + L-glutamine + ATP + H2O = L-glutaminyl-tRNA(Gln) + L-glutamate + ADP + phosphate + H(+)</text>
        <dbReference type="Rhea" id="RHEA:17521"/>
        <dbReference type="Rhea" id="RHEA-COMP:9681"/>
        <dbReference type="Rhea" id="RHEA-COMP:9684"/>
        <dbReference type="ChEBI" id="CHEBI:15377"/>
        <dbReference type="ChEBI" id="CHEBI:15378"/>
        <dbReference type="ChEBI" id="CHEBI:29985"/>
        <dbReference type="ChEBI" id="CHEBI:30616"/>
        <dbReference type="ChEBI" id="CHEBI:43474"/>
        <dbReference type="ChEBI" id="CHEBI:58359"/>
        <dbReference type="ChEBI" id="CHEBI:78520"/>
        <dbReference type="ChEBI" id="CHEBI:78521"/>
        <dbReference type="ChEBI" id="CHEBI:456216"/>
    </reaction>
</comment>
<comment type="subunit">
    <text evidence="1">Heterodimer of GatD and GatE.</text>
</comment>
<comment type="similarity">
    <text evidence="1">Belongs to the asparaginase 1 family. GatD subfamily.</text>
</comment>
<name>GATD_SULAC</name>